<organism>
    <name type="scientific">Rattus norvegicus</name>
    <name type="common">Rat</name>
    <dbReference type="NCBI Taxonomy" id="10116"/>
    <lineage>
        <taxon>Eukaryota</taxon>
        <taxon>Metazoa</taxon>
        <taxon>Chordata</taxon>
        <taxon>Craniata</taxon>
        <taxon>Vertebrata</taxon>
        <taxon>Euteleostomi</taxon>
        <taxon>Mammalia</taxon>
        <taxon>Eutheria</taxon>
        <taxon>Euarchontoglires</taxon>
        <taxon>Glires</taxon>
        <taxon>Rodentia</taxon>
        <taxon>Myomorpha</taxon>
        <taxon>Muroidea</taxon>
        <taxon>Muridae</taxon>
        <taxon>Murinae</taxon>
        <taxon>Rattus</taxon>
    </lineage>
</organism>
<geneLocation type="mitochondrion"/>
<evidence type="ECO:0000250" key="1">
    <source>
        <dbReference type="UniProtKB" id="P00395"/>
    </source>
</evidence>
<evidence type="ECO:0000250" key="2">
    <source>
        <dbReference type="UniProtKB" id="P00396"/>
    </source>
</evidence>
<evidence type="ECO:0000250" key="3">
    <source>
        <dbReference type="UniProtKB" id="P00401"/>
    </source>
</evidence>
<evidence type="ECO:0000305" key="4"/>
<evidence type="ECO:0000312" key="5">
    <source>
        <dbReference type="RGD" id="621871"/>
    </source>
</evidence>
<name>COX1_RAT</name>
<gene>
    <name evidence="5" type="primary">Mt-co1</name>
    <name type="synonym">Coi</name>
    <name type="synonym">Mtco1</name>
</gene>
<proteinExistence type="evidence at transcript level"/>
<dbReference type="EC" id="7.1.1.9"/>
<dbReference type="EMBL" id="X14848">
    <property type="protein sequence ID" value="CAA32956.1"/>
    <property type="molecule type" value="Genomic_DNA"/>
</dbReference>
<dbReference type="EMBL" id="J01435">
    <property type="protein sequence ID" value="AAD15016.1"/>
    <property type="molecule type" value="Genomic_DNA"/>
</dbReference>
<dbReference type="EMBL" id="AY172581">
    <property type="protein sequence ID" value="AAN77596.1"/>
    <property type="molecule type" value="Genomic_DNA"/>
</dbReference>
<dbReference type="EMBL" id="V00676">
    <property type="protein sequence ID" value="CAA24046.1"/>
    <property type="molecule type" value="Genomic_DNA"/>
</dbReference>
<dbReference type="EMBL" id="V00678">
    <property type="protein sequence ID" value="CAA24050.1"/>
    <property type="molecule type" value="Genomic_DNA"/>
</dbReference>
<dbReference type="EMBL" id="S79304">
    <property type="protein sequence ID" value="AAB21298.2"/>
    <property type="molecule type" value="mRNA"/>
</dbReference>
<dbReference type="PIR" id="S04749">
    <property type="entry name" value="S04749"/>
</dbReference>
<dbReference type="RefSeq" id="AP_004894.1">
    <property type="nucleotide sequence ID" value="AC_000022.2"/>
</dbReference>
<dbReference type="RefSeq" id="YP_665631.1">
    <property type="nucleotide sequence ID" value="NC_001665.2"/>
</dbReference>
<dbReference type="SMR" id="P05503"/>
<dbReference type="CORUM" id="P05503"/>
<dbReference type="FunCoup" id="P05503">
    <property type="interactions" value="89"/>
</dbReference>
<dbReference type="IntAct" id="P05503">
    <property type="interactions" value="1"/>
</dbReference>
<dbReference type="MINT" id="P05503"/>
<dbReference type="STRING" id="10116.ENSRNOP00000039048"/>
<dbReference type="GlyGen" id="P05503">
    <property type="glycosylation" value="1 site, 1 O-linked glycan (1 site)"/>
</dbReference>
<dbReference type="iPTMnet" id="P05503"/>
<dbReference type="PhosphoSitePlus" id="P05503"/>
<dbReference type="SwissPalm" id="P05503"/>
<dbReference type="jPOST" id="P05503"/>
<dbReference type="PaxDb" id="10116-ENSRNOP00000039048"/>
<dbReference type="Ensembl" id="ENSRNOT00000050156.3">
    <property type="protein sequence ID" value="ENSRNOP00000039048.3"/>
    <property type="gene ID" value="ENSRNOG00000034234.3"/>
</dbReference>
<dbReference type="GeneID" id="26195"/>
<dbReference type="KEGG" id="rno:26195"/>
<dbReference type="AGR" id="RGD:621871"/>
<dbReference type="CTD" id="4512"/>
<dbReference type="RGD" id="621871">
    <property type="gene designation" value="Mt-co1"/>
</dbReference>
<dbReference type="eggNOG" id="KOG4769">
    <property type="taxonomic scope" value="Eukaryota"/>
</dbReference>
<dbReference type="GeneTree" id="ENSGT00390000001518"/>
<dbReference type="HOGENOM" id="CLU_011899_7_3_1"/>
<dbReference type="InParanoid" id="P05503"/>
<dbReference type="OMA" id="WAMMSIG"/>
<dbReference type="OrthoDB" id="5984008at2759"/>
<dbReference type="Reactome" id="R-RNO-5628897">
    <property type="pathway name" value="TP53 Regulates Metabolic Genes"/>
</dbReference>
<dbReference type="Reactome" id="R-RNO-611105">
    <property type="pathway name" value="Respiratory electron transport"/>
</dbReference>
<dbReference type="Reactome" id="R-RNO-9707564">
    <property type="pathway name" value="Cytoprotection by HMOX1"/>
</dbReference>
<dbReference type="Reactome" id="R-RNO-9837999">
    <property type="pathway name" value="Mitochondrial protein degradation"/>
</dbReference>
<dbReference type="Reactome" id="R-RNO-9864848">
    <property type="pathway name" value="Complex IV assembly"/>
</dbReference>
<dbReference type="UniPathway" id="UPA00705"/>
<dbReference type="CD-CODE" id="246D7041">
    <property type="entry name" value="Chromatoid body"/>
</dbReference>
<dbReference type="PRO" id="PR:P05503"/>
<dbReference type="Proteomes" id="UP000002494">
    <property type="component" value="Mitochondrion"/>
</dbReference>
<dbReference type="Bgee" id="ENSRNOG00000034234">
    <property type="expression patterns" value="Expressed in esophagus and 18 other cell types or tissues"/>
</dbReference>
<dbReference type="ExpressionAtlas" id="P05503">
    <property type="expression patterns" value="baseline and differential"/>
</dbReference>
<dbReference type="GO" id="GO:0005743">
    <property type="term" value="C:mitochondrial inner membrane"/>
    <property type="evidence" value="ECO:0000266"/>
    <property type="project" value="RGD"/>
</dbReference>
<dbReference type="GO" id="GO:0031966">
    <property type="term" value="C:mitochondrial membrane"/>
    <property type="evidence" value="ECO:0000266"/>
    <property type="project" value="RGD"/>
</dbReference>
<dbReference type="GO" id="GO:0005739">
    <property type="term" value="C:mitochondrion"/>
    <property type="evidence" value="ECO:0000266"/>
    <property type="project" value="RGD"/>
</dbReference>
<dbReference type="GO" id="GO:0045277">
    <property type="term" value="C:respiratory chain complex IV"/>
    <property type="evidence" value="ECO:0000250"/>
    <property type="project" value="UniProtKB"/>
</dbReference>
<dbReference type="GO" id="GO:0004129">
    <property type="term" value="F:cytochrome-c oxidase activity"/>
    <property type="evidence" value="ECO:0000266"/>
    <property type="project" value="RGD"/>
</dbReference>
<dbReference type="GO" id="GO:0020037">
    <property type="term" value="F:heme binding"/>
    <property type="evidence" value="ECO:0007669"/>
    <property type="project" value="InterPro"/>
</dbReference>
<dbReference type="GO" id="GO:0046872">
    <property type="term" value="F:metal ion binding"/>
    <property type="evidence" value="ECO:0007669"/>
    <property type="project" value="UniProtKB-KW"/>
</dbReference>
<dbReference type="GO" id="GO:0009060">
    <property type="term" value="P:aerobic respiration"/>
    <property type="evidence" value="ECO:0000318"/>
    <property type="project" value="GO_Central"/>
</dbReference>
<dbReference type="GO" id="GO:0021549">
    <property type="term" value="P:cerebellum development"/>
    <property type="evidence" value="ECO:0000270"/>
    <property type="project" value="RGD"/>
</dbReference>
<dbReference type="GO" id="GO:0006119">
    <property type="term" value="P:oxidative phosphorylation"/>
    <property type="evidence" value="ECO:0007669"/>
    <property type="project" value="UniProtKB-UniPathway"/>
</dbReference>
<dbReference type="GO" id="GO:0045907">
    <property type="term" value="P:positive regulation of vasoconstriction"/>
    <property type="evidence" value="ECO:0000266"/>
    <property type="project" value="RGD"/>
</dbReference>
<dbReference type="GO" id="GO:0022904">
    <property type="term" value="P:respiratory electron transport chain"/>
    <property type="evidence" value="ECO:0000318"/>
    <property type="project" value="GO_Central"/>
</dbReference>
<dbReference type="GO" id="GO:0046688">
    <property type="term" value="P:response to copper ion"/>
    <property type="evidence" value="ECO:0000270"/>
    <property type="project" value="RGD"/>
</dbReference>
<dbReference type="GO" id="GO:0051602">
    <property type="term" value="P:response to electrical stimulus"/>
    <property type="evidence" value="ECO:0000270"/>
    <property type="project" value="RGD"/>
</dbReference>
<dbReference type="GO" id="GO:0001666">
    <property type="term" value="P:response to hypoxia"/>
    <property type="evidence" value="ECO:0000270"/>
    <property type="project" value="RGD"/>
</dbReference>
<dbReference type="GO" id="GO:0006979">
    <property type="term" value="P:response to oxidative stress"/>
    <property type="evidence" value="ECO:0000314"/>
    <property type="project" value="RGD"/>
</dbReference>
<dbReference type="CDD" id="cd01663">
    <property type="entry name" value="Cyt_c_Oxidase_I"/>
    <property type="match status" value="1"/>
</dbReference>
<dbReference type="FunFam" id="1.20.210.10:FF:000001">
    <property type="entry name" value="Cytochrome c oxidase subunit 1"/>
    <property type="match status" value="1"/>
</dbReference>
<dbReference type="Gene3D" id="1.20.210.10">
    <property type="entry name" value="Cytochrome c oxidase-like, subunit I domain"/>
    <property type="match status" value="1"/>
</dbReference>
<dbReference type="InterPro" id="IPR023616">
    <property type="entry name" value="Cyt_c_oxase-like_su1_dom"/>
</dbReference>
<dbReference type="InterPro" id="IPR036927">
    <property type="entry name" value="Cyt_c_oxase-like_su1_sf"/>
</dbReference>
<dbReference type="InterPro" id="IPR000883">
    <property type="entry name" value="Cyt_C_Oxase_1"/>
</dbReference>
<dbReference type="InterPro" id="IPR023615">
    <property type="entry name" value="Cyt_c_Oxase_su1_BS"/>
</dbReference>
<dbReference type="InterPro" id="IPR033944">
    <property type="entry name" value="Cyt_c_oxase_su1_dom"/>
</dbReference>
<dbReference type="PANTHER" id="PTHR10422">
    <property type="entry name" value="CYTOCHROME C OXIDASE SUBUNIT 1"/>
    <property type="match status" value="1"/>
</dbReference>
<dbReference type="PANTHER" id="PTHR10422:SF18">
    <property type="entry name" value="CYTOCHROME C OXIDASE SUBUNIT 1"/>
    <property type="match status" value="1"/>
</dbReference>
<dbReference type="Pfam" id="PF00115">
    <property type="entry name" value="COX1"/>
    <property type="match status" value="1"/>
</dbReference>
<dbReference type="PRINTS" id="PR01165">
    <property type="entry name" value="CYCOXIDASEI"/>
</dbReference>
<dbReference type="SUPFAM" id="SSF81442">
    <property type="entry name" value="Cytochrome c oxidase subunit I-like"/>
    <property type="match status" value="1"/>
</dbReference>
<dbReference type="PROSITE" id="PS50855">
    <property type="entry name" value="COX1"/>
    <property type="match status" value="1"/>
</dbReference>
<dbReference type="PROSITE" id="PS00077">
    <property type="entry name" value="COX1_CUB"/>
    <property type="match status" value="1"/>
</dbReference>
<feature type="chain" id="PRO_0000183406" description="Cytochrome c oxidase subunit 1">
    <location>
        <begin position="1"/>
        <end position="514"/>
    </location>
</feature>
<feature type="topological domain" description="Mitochondrial matrix" evidence="2">
    <location>
        <begin position="1"/>
        <end position="11"/>
    </location>
</feature>
<feature type="transmembrane region" description="Helical; Name=I" evidence="2">
    <location>
        <begin position="12"/>
        <end position="40"/>
    </location>
</feature>
<feature type="topological domain" description="Mitochondrial intermembrane" evidence="2">
    <location>
        <begin position="41"/>
        <end position="50"/>
    </location>
</feature>
<feature type="transmembrane region" description="Helical; Name=II" evidence="2">
    <location>
        <begin position="51"/>
        <end position="86"/>
    </location>
</feature>
<feature type="topological domain" description="Mitochondrial matrix" evidence="2">
    <location>
        <begin position="87"/>
        <end position="94"/>
    </location>
</feature>
<feature type="transmembrane region" description="Helical; Name=III" evidence="2">
    <location>
        <begin position="95"/>
        <end position="117"/>
    </location>
</feature>
<feature type="topological domain" description="Mitochondrial intermembrane" evidence="2">
    <location>
        <begin position="118"/>
        <end position="140"/>
    </location>
</feature>
<feature type="transmembrane region" description="Helical; Name=IV" evidence="2">
    <location>
        <begin position="141"/>
        <end position="170"/>
    </location>
</feature>
<feature type="topological domain" description="Mitochondrial matrix" evidence="2">
    <location>
        <begin position="171"/>
        <end position="182"/>
    </location>
</feature>
<feature type="transmembrane region" description="Helical; Name=V" evidence="2">
    <location>
        <begin position="183"/>
        <end position="212"/>
    </location>
</feature>
<feature type="topological domain" description="Mitochondrial intermembrane" evidence="2">
    <location>
        <begin position="213"/>
        <end position="227"/>
    </location>
</feature>
<feature type="transmembrane region" description="Helical; Name=VI" evidence="2">
    <location>
        <begin position="228"/>
        <end position="261"/>
    </location>
</feature>
<feature type="topological domain" description="Mitochondrial matrix" evidence="2">
    <location>
        <begin position="262"/>
        <end position="269"/>
    </location>
</feature>
<feature type="transmembrane region" description="Helical; Name=VII" evidence="2">
    <location>
        <begin position="270"/>
        <end position="286"/>
    </location>
</feature>
<feature type="topological domain" description="Mitochondrial intermembrane" evidence="2">
    <location>
        <begin position="287"/>
        <end position="298"/>
    </location>
</feature>
<feature type="transmembrane region" description="Helical; Name=VIII" evidence="2">
    <location>
        <begin position="299"/>
        <end position="327"/>
    </location>
</feature>
<feature type="topological domain" description="Mitochondrial matrix" evidence="2">
    <location>
        <begin position="328"/>
        <end position="335"/>
    </location>
</feature>
<feature type="transmembrane region" description="Helical; Name=IX" evidence="2">
    <location>
        <begin position="336"/>
        <end position="357"/>
    </location>
</feature>
<feature type="topological domain" description="Mitochondrial intermembrane" evidence="2">
    <location>
        <begin position="358"/>
        <end position="370"/>
    </location>
</feature>
<feature type="transmembrane region" description="Helical; Name=X" evidence="2">
    <location>
        <begin position="371"/>
        <end position="400"/>
    </location>
</feature>
<feature type="topological domain" description="Mitochondrial matrix" evidence="2">
    <location>
        <begin position="401"/>
        <end position="406"/>
    </location>
</feature>
<feature type="transmembrane region" description="Helical; Name=XI" evidence="2">
    <location>
        <begin position="407"/>
        <end position="433"/>
    </location>
</feature>
<feature type="topological domain" description="Mitochondrial intermembrane" evidence="2">
    <location>
        <begin position="434"/>
        <end position="446"/>
    </location>
</feature>
<feature type="transmembrane region" description="Helical; Name=XII" evidence="2">
    <location>
        <begin position="447"/>
        <end position="478"/>
    </location>
</feature>
<feature type="topological domain" description="Mitochondrial matrix" evidence="2">
    <location>
        <begin position="479"/>
        <end position="514"/>
    </location>
</feature>
<feature type="binding site" evidence="2">
    <location>
        <position position="40"/>
    </location>
    <ligand>
        <name>Na(+)</name>
        <dbReference type="ChEBI" id="CHEBI:29101"/>
    </ligand>
</feature>
<feature type="binding site" evidence="2">
    <location>
        <position position="45"/>
    </location>
    <ligand>
        <name>Na(+)</name>
        <dbReference type="ChEBI" id="CHEBI:29101"/>
    </ligand>
</feature>
<feature type="binding site" description="axial binding residue" evidence="2">
    <location>
        <position position="61"/>
    </location>
    <ligand>
        <name>Fe(II)-heme a</name>
        <dbReference type="ChEBI" id="CHEBI:61715"/>
        <note>low-spin</note>
    </ligand>
    <ligandPart>
        <name>Fe</name>
        <dbReference type="ChEBI" id="CHEBI:18248"/>
    </ligandPart>
</feature>
<feature type="binding site" evidence="2">
    <location>
        <position position="240"/>
    </location>
    <ligand>
        <name>Cu cation</name>
        <dbReference type="ChEBI" id="CHEBI:23378"/>
        <label>B</label>
    </ligand>
</feature>
<feature type="binding site" evidence="2">
    <location>
        <position position="244"/>
    </location>
    <ligand>
        <name>O2</name>
        <dbReference type="ChEBI" id="CHEBI:15379"/>
    </ligand>
</feature>
<feature type="binding site" evidence="2">
    <location>
        <position position="290"/>
    </location>
    <ligand>
        <name>Cu cation</name>
        <dbReference type="ChEBI" id="CHEBI:23378"/>
        <label>B</label>
    </ligand>
</feature>
<feature type="binding site" evidence="2">
    <location>
        <position position="291"/>
    </location>
    <ligand>
        <name>Cu cation</name>
        <dbReference type="ChEBI" id="CHEBI:23378"/>
        <label>B</label>
    </ligand>
</feature>
<feature type="binding site" evidence="2">
    <location>
        <position position="368"/>
    </location>
    <ligand>
        <name>Mg(2+)</name>
        <dbReference type="ChEBI" id="CHEBI:18420"/>
        <note>ligand shared with MT-CO2</note>
    </ligand>
</feature>
<feature type="binding site" evidence="2">
    <location>
        <position position="369"/>
    </location>
    <ligand>
        <name>Mg(2+)</name>
        <dbReference type="ChEBI" id="CHEBI:18420"/>
        <note>ligand shared with MT-CO2</note>
    </ligand>
</feature>
<feature type="binding site" description="axial binding residue" evidence="2">
    <location>
        <position position="376"/>
    </location>
    <ligand>
        <name>heme a3</name>
        <dbReference type="ChEBI" id="CHEBI:83282"/>
        <note>high-spin</note>
    </ligand>
    <ligandPart>
        <name>Fe</name>
        <dbReference type="ChEBI" id="CHEBI:18248"/>
    </ligandPart>
</feature>
<feature type="binding site" description="axial binding residue" evidence="2">
    <location>
        <position position="378"/>
    </location>
    <ligand>
        <name>Fe(II)-heme a</name>
        <dbReference type="ChEBI" id="CHEBI:61715"/>
        <note>low-spin</note>
    </ligand>
    <ligandPart>
        <name>Fe</name>
        <dbReference type="ChEBI" id="CHEBI:18248"/>
    </ligandPart>
</feature>
<feature type="binding site" evidence="2">
    <location>
        <position position="441"/>
    </location>
    <ligand>
        <name>Na(+)</name>
        <dbReference type="ChEBI" id="CHEBI:29101"/>
    </ligand>
</feature>
<feature type="cross-link" description="1'-histidyl-3'-tyrosine (His-Tyr)" evidence="2">
    <location>
        <begin position="240"/>
        <end position="244"/>
    </location>
</feature>
<feature type="sequence conflict" description="In Ref. 1; CAA32956, 2; AAD15016 and 4; CAA24046." evidence="4" ref="1 2 4">
    <original>L</original>
    <variation>F</variation>
    <location>
        <position position="2"/>
    </location>
</feature>
<feature type="sequence conflict" description="In Ref. 2; AAD15016." evidence="4" ref="2">
    <original>R</original>
    <variation>G</variation>
    <location>
        <position position="5"/>
    </location>
</feature>
<feature type="sequence conflict" description="In Ref. 2; AAD15016." evidence="4" ref="2">
    <original>H</original>
    <variation>P</variation>
    <location>
        <position position="12"/>
    </location>
</feature>
<feature type="sequence conflict" description="In Ref. 2; AAD15016." evidence="4" ref="2">
    <original>P</original>
    <variation>L</variation>
    <location>
        <position position="44"/>
    </location>
</feature>
<feature type="sequence conflict" description="In Ref. 2; AAD15016." evidence="4" ref="2">
    <original>I</original>
    <variation>L</variation>
    <location>
        <position position="57"/>
    </location>
</feature>
<feature type="sequence conflict" description="In Ref. 1; CAA32956 and 2; AAD15016." evidence="4" ref="1 2">
    <original>A</original>
    <variation>V</variation>
    <location>
        <position position="141"/>
    </location>
</feature>
<feature type="sequence conflict" description="In Ref. 5; AAB21298." evidence="4" ref="5">
    <original>NTT</original>
    <variation>EFP</variation>
    <location>
        <begin position="216"/>
        <end position="218"/>
    </location>
</feature>
<feature type="sequence conflict" description="In Ref. 2; AAD15016." evidence="4" ref="2">
    <original>D</original>
    <variation>G</variation>
    <location>
        <position position="227"/>
    </location>
</feature>
<feature type="sequence conflict" description="In Ref. 2; AAD15016." evidence="4" ref="2">
    <original>P</original>
    <variation>L</variation>
    <location>
        <position position="249"/>
    </location>
</feature>
<feature type="sequence conflict" description="In Ref. 2; AAD15016." evidence="4" ref="2">
    <original>G</original>
    <variation>E</variation>
    <location>
        <position position="252"/>
    </location>
</feature>
<feature type="sequence conflict" description="In Ref. 1; CAA32956 and 2; AAD15016." evidence="4" ref="1 2">
    <original>A</original>
    <variation>T</variation>
    <location>
        <position position="276"/>
    </location>
</feature>
<feature type="sequence conflict" description="In Ref. 2; AAD15016 and 5; AAB21298." evidence="4" ref="2 5">
    <original>G</original>
    <variation>C</variation>
    <location>
        <position position="392"/>
    </location>
</feature>
<feature type="sequence conflict" description="In Ref. 2; AAD15016." evidence="4" ref="2">
    <original>H</original>
    <variation>L</variation>
    <location>
        <position position="413"/>
    </location>
</feature>
<reference key="1">
    <citation type="journal article" date="1989" name="J. Mol. Evol.">
        <title>The complete nucleotide sequence of the Rattus norvegicus mitochondrial genome: cryptic signals revealed by comparative analysis between vertebrates.</title>
        <authorList>
            <person name="Gadaleta G."/>
            <person name="Pepe G."/>
            <person name="de Candia G."/>
            <person name="Quagliariello C."/>
            <person name="Sbisa E."/>
            <person name="Saccone C."/>
        </authorList>
    </citation>
    <scope>NUCLEOTIDE SEQUENCE [GENOMIC DNA]</scope>
    <source>
        <strain>Wistar</strain>
    </source>
</reference>
<reference key="2">
    <citation type="journal article" date="1981" name="Curr. Genet.">
        <title>Analysis of a DNA segment from rat liver mitochondria containing the genes for the cytochrome oxidase subunits I, II, II, ATPase subunit 6, and several tRNA genes.</title>
        <authorList>
            <person name="Grosskopf R."/>
            <person name="Feldmann H."/>
        </authorList>
    </citation>
    <scope>NUCLEOTIDE SEQUENCE [GENOMIC DNA]</scope>
    <source>
        <strain>Sprague-Dawley</strain>
        <tissue>Liver</tissue>
    </source>
</reference>
<reference key="3">
    <citation type="journal article" date="2004" name="Nature">
        <title>Genome sequence of the Brown Norway rat yields insights into mammalian evolution.</title>
        <authorList>
            <person name="Gibbs R.A."/>
            <person name="Weinstock G.M."/>
            <person name="Metzker M.L."/>
            <person name="Muzny D.M."/>
            <person name="Sodergren E.J."/>
            <person name="Scherer S."/>
            <person name="Scott G."/>
            <person name="Steffen D."/>
            <person name="Worley K.C."/>
            <person name="Burch P.E."/>
            <person name="Okwuonu G."/>
            <person name="Hines S."/>
            <person name="Lewis L."/>
            <person name="Deramo C."/>
            <person name="Delgado O."/>
            <person name="Dugan-Rocha S."/>
            <person name="Miner G."/>
            <person name="Morgan M."/>
            <person name="Hawes A."/>
            <person name="Gill R."/>
            <person name="Holt R.A."/>
            <person name="Adams M.D."/>
            <person name="Amanatides P.G."/>
            <person name="Baden-Tillson H."/>
            <person name="Barnstead M."/>
            <person name="Chin S."/>
            <person name="Evans C.A."/>
            <person name="Ferriera S."/>
            <person name="Fosler C."/>
            <person name="Glodek A."/>
            <person name="Gu Z."/>
            <person name="Jennings D."/>
            <person name="Kraft C.L."/>
            <person name="Nguyen T."/>
            <person name="Pfannkoch C.M."/>
            <person name="Sitter C."/>
            <person name="Sutton G.G."/>
            <person name="Venter J.C."/>
            <person name="Woodage T."/>
            <person name="Smith D."/>
            <person name="Lee H.-M."/>
            <person name="Gustafson E."/>
            <person name="Cahill P."/>
            <person name="Kana A."/>
            <person name="Doucette-Stamm L."/>
            <person name="Weinstock K."/>
            <person name="Fechtel K."/>
            <person name="Weiss R.B."/>
            <person name="Dunn D.M."/>
            <person name="Green E.D."/>
            <person name="Blakesley R.W."/>
            <person name="Bouffard G.G."/>
            <person name="De Jong P.J."/>
            <person name="Osoegawa K."/>
            <person name="Zhu B."/>
            <person name="Marra M."/>
            <person name="Schein J."/>
            <person name="Bosdet I."/>
            <person name="Fjell C."/>
            <person name="Jones S."/>
            <person name="Krzywinski M."/>
            <person name="Mathewson C."/>
            <person name="Siddiqui A."/>
            <person name="Wye N."/>
            <person name="McPherson J."/>
            <person name="Zhao S."/>
            <person name="Fraser C.M."/>
            <person name="Shetty J."/>
            <person name="Shatsman S."/>
            <person name="Geer K."/>
            <person name="Chen Y."/>
            <person name="Abramzon S."/>
            <person name="Nierman W.C."/>
            <person name="Havlak P.H."/>
            <person name="Chen R."/>
            <person name="Durbin K.J."/>
            <person name="Egan A."/>
            <person name="Ren Y."/>
            <person name="Song X.-Z."/>
            <person name="Li B."/>
            <person name="Liu Y."/>
            <person name="Qin X."/>
            <person name="Cawley S."/>
            <person name="Cooney A.J."/>
            <person name="D'Souza L.M."/>
            <person name="Martin K."/>
            <person name="Wu J.Q."/>
            <person name="Gonzalez-Garay M.L."/>
            <person name="Jackson A.R."/>
            <person name="Kalafus K.J."/>
            <person name="McLeod M.P."/>
            <person name="Milosavljevic A."/>
            <person name="Virk D."/>
            <person name="Volkov A."/>
            <person name="Wheeler D.A."/>
            <person name="Zhang Z."/>
            <person name="Bailey J.A."/>
            <person name="Eichler E.E."/>
            <person name="Tuzun E."/>
            <person name="Birney E."/>
            <person name="Mongin E."/>
            <person name="Ureta-Vidal A."/>
            <person name="Woodwark C."/>
            <person name="Zdobnov E."/>
            <person name="Bork P."/>
            <person name="Suyama M."/>
            <person name="Torrents D."/>
            <person name="Alexandersson M."/>
            <person name="Trask B.J."/>
            <person name="Young J.M."/>
            <person name="Huang H."/>
            <person name="Wang H."/>
            <person name="Xing H."/>
            <person name="Daniels S."/>
            <person name="Gietzen D."/>
            <person name="Schmidt J."/>
            <person name="Stevens K."/>
            <person name="Vitt U."/>
            <person name="Wingrove J."/>
            <person name="Camara F."/>
            <person name="Mar Alba M."/>
            <person name="Abril J.F."/>
            <person name="Guigo R."/>
            <person name="Smit A."/>
            <person name="Dubchak I."/>
            <person name="Rubin E.M."/>
            <person name="Couronne O."/>
            <person name="Poliakov A."/>
            <person name="Huebner N."/>
            <person name="Ganten D."/>
            <person name="Goesele C."/>
            <person name="Hummel O."/>
            <person name="Kreitler T."/>
            <person name="Lee Y.-A."/>
            <person name="Monti J."/>
            <person name="Schulz H."/>
            <person name="Zimdahl H."/>
            <person name="Himmelbauer H."/>
            <person name="Lehrach H."/>
            <person name="Jacob H.J."/>
            <person name="Bromberg S."/>
            <person name="Gullings-Handley J."/>
            <person name="Jensen-Seaman M.I."/>
            <person name="Kwitek A.E."/>
            <person name="Lazar J."/>
            <person name="Pasko D."/>
            <person name="Tonellato P.J."/>
            <person name="Twigger S."/>
            <person name="Ponting C.P."/>
            <person name="Duarte J.M."/>
            <person name="Rice S."/>
            <person name="Goodstadt L."/>
            <person name="Beatson S.A."/>
            <person name="Emes R.D."/>
            <person name="Winter E.E."/>
            <person name="Webber C."/>
            <person name="Brandt P."/>
            <person name="Nyakatura G."/>
            <person name="Adetobi M."/>
            <person name="Chiaromonte F."/>
            <person name="Elnitski L."/>
            <person name="Eswara P."/>
            <person name="Hardison R.C."/>
            <person name="Hou M."/>
            <person name="Kolbe D."/>
            <person name="Makova K."/>
            <person name="Miller W."/>
            <person name="Nekrutenko A."/>
            <person name="Riemer C."/>
            <person name="Schwartz S."/>
            <person name="Taylor J."/>
            <person name="Yang S."/>
            <person name="Zhang Y."/>
            <person name="Lindpaintner K."/>
            <person name="Andrews T.D."/>
            <person name="Caccamo M."/>
            <person name="Clamp M."/>
            <person name="Clarke L."/>
            <person name="Curwen V."/>
            <person name="Durbin R.M."/>
            <person name="Eyras E."/>
            <person name="Searle S.M."/>
            <person name="Cooper G.M."/>
            <person name="Batzoglou S."/>
            <person name="Brudno M."/>
            <person name="Sidow A."/>
            <person name="Stone E.A."/>
            <person name="Payseur B.A."/>
            <person name="Bourque G."/>
            <person name="Lopez-Otin C."/>
            <person name="Puente X.S."/>
            <person name="Chakrabarti K."/>
            <person name="Chatterji S."/>
            <person name="Dewey C."/>
            <person name="Pachter L."/>
            <person name="Bray N."/>
            <person name="Yap V.B."/>
            <person name="Caspi A."/>
            <person name="Tesler G."/>
            <person name="Pevzner P.A."/>
            <person name="Haussler D."/>
            <person name="Roskin K.M."/>
            <person name="Baertsch R."/>
            <person name="Clawson H."/>
            <person name="Furey T.S."/>
            <person name="Hinrichs A.S."/>
            <person name="Karolchik D."/>
            <person name="Kent W.J."/>
            <person name="Rosenbloom K.R."/>
            <person name="Trumbower H."/>
            <person name="Weirauch M."/>
            <person name="Cooper D.N."/>
            <person name="Stenson P.D."/>
            <person name="Ma B."/>
            <person name="Brent M."/>
            <person name="Arumugam M."/>
            <person name="Shteynberg D."/>
            <person name="Copley R.R."/>
            <person name="Taylor M.S."/>
            <person name="Riethman H."/>
            <person name="Mudunuri U."/>
            <person name="Peterson J."/>
            <person name="Guyer M."/>
            <person name="Felsenfeld A."/>
            <person name="Old S."/>
            <person name="Mockrin S."/>
            <person name="Collins F.S."/>
        </authorList>
    </citation>
    <scope>NUCLEOTIDE SEQUENCE [LARGE SCALE GENOMIC DNA]</scope>
    <source>
        <strain>Brown Norway</strain>
    </source>
</reference>
<reference key="4">
    <citation type="journal article" date="1983" name="Nucleic Acids Res.">
        <title>Tumor-associated mutations of rat mitochondrial transfer RNA genes.</title>
        <authorList>
            <person name="Taira M."/>
            <person name="Yoshida E."/>
            <person name="Kobayashi M."/>
            <person name="Yaginuma K."/>
            <person name="Koike K."/>
        </authorList>
    </citation>
    <scope>NUCLEOTIDE SEQUENCE [GENOMIC DNA] OF 1-7</scope>
</reference>
<reference key="5">
    <citation type="journal article" date="1991" name="Mol. Endocrinol.">
        <title>Hormonal regulation of cytochrome oxidase subunit messenger RNAs in rat Sertoli cells.</title>
        <authorList>
            <person name="Ku C.Y."/>
            <person name="Lu Q."/>
            <person name="Ussuf K.K."/>
            <person name="Weinstock G.M."/>
            <person name="Sanborn B.M."/>
        </authorList>
    </citation>
    <scope>NUCLEOTIDE SEQUENCE [MRNA] OF 216-514</scope>
    <source>
        <tissue>Sertoli cell</tissue>
    </source>
</reference>
<keyword id="KW-0106">Calcium</keyword>
<keyword id="KW-0186">Copper</keyword>
<keyword id="KW-0249">Electron transport</keyword>
<keyword id="KW-0349">Heme</keyword>
<keyword id="KW-0408">Iron</keyword>
<keyword id="KW-0460">Magnesium</keyword>
<keyword id="KW-0472">Membrane</keyword>
<keyword id="KW-0479">Metal-binding</keyword>
<keyword id="KW-0496">Mitochondrion</keyword>
<keyword id="KW-0999">Mitochondrion inner membrane</keyword>
<keyword id="KW-1185">Reference proteome</keyword>
<keyword id="KW-0679">Respiratory chain</keyword>
<keyword id="KW-0915">Sodium</keyword>
<keyword id="KW-1278">Translocase</keyword>
<keyword id="KW-0812">Transmembrane</keyword>
<keyword id="KW-1133">Transmembrane helix</keyword>
<keyword id="KW-0813">Transport</keyword>
<protein>
    <recommendedName>
        <fullName>Cytochrome c oxidase subunit 1</fullName>
        <ecNumber>7.1.1.9</ecNumber>
    </recommendedName>
    <alternativeName>
        <fullName>Cytochrome c oxidase polypeptide I</fullName>
    </alternativeName>
</protein>
<accession>P05503</accession>
<sequence length="514" mass="56845">MLVNRWLFSTNHKDIGTLYLLFGAWAGMVGTALSILIRAELGQPGALLGDDQIYNVIVTAHAFVMIFFMVMPMMIGGFGNWLVPLMIGAPDMAFPRMNNMSFWLLPPSFLLLLASSMVEAGAGTGWTVYPPLAGNLAHAGASVDLTIFSLHLAGVSSILGAINFITTIINMKPPAMTQYQTPLFVWSVLITAVLLLLSLPVLAAGITMLLTDRNLNTTFFDPAGGGDPILYQHLFWFFGHPEVYILILPGFGIISHVVTYYSGKKEPFGYMGMVWAMMSIGFLGFIVWAHHMFTVGLDVDTRAYFTSATMIIAIPTGVKVFSWLATLHGGNIKWSPAMLWALGFIFLFTVGGLTGIVLSNSSLDIVLHDTYYVVAHFHYVLSMGAVFAIMAGFVHWFPLFSGYTLNDTWAKAHFAIMFVGVNMTFFPQHFLGLAGMPRRYSDYPDAYTTWNTVSSMGSFISLTAVLVMIFMIWEAFASKREVLSISYSSTNLEWLHGCPPPYHTFEEPSYVKVK</sequence>
<comment type="function">
    <text evidence="3">Component of the cytochrome c oxidase, the last enzyme in the mitochondrial electron transport chain which drives oxidative phosphorylation. The respiratory chain contains 3 multisubunit complexes succinate dehydrogenase (complex II, CII), ubiquinol-cytochrome c oxidoreductase (cytochrome b-c1 complex, complex III, CIII) and cytochrome c oxidase (complex IV, CIV), that cooperate to transfer electrons derived from NADH and succinate to molecular oxygen, creating an electrochemical gradient over the inner membrane that drives transmembrane transport and the ATP synthase. Cytochrome c oxidase is the component of the respiratory chain that catalyzes the reduction of oxygen to water. Electrons originating from reduced cytochrome c in the intermembrane space (IMS) are transferred via the dinuclear copper A center (CU(A)) of subunit 2 and heme A of subunit 1 to the active site in subunit 1, a binuclear center (BNC) formed by heme A3 and copper B (CU(B)). The BNC reduces molecular oxygen to 2 water molecules using 4 electrons from cytochrome c in the IMS and 4 protons from the mitochondrial matrix.</text>
</comment>
<comment type="catalytic activity">
    <reaction evidence="3">
        <text>4 Fe(II)-[cytochrome c] + O2 + 8 H(+)(in) = 4 Fe(III)-[cytochrome c] + 2 H2O + 4 H(+)(out)</text>
        <dbReference type="Rhea" id="RHEA:11436"/>
        <dbReference type="Rhea" id="RHEA-COMP:10350"/>
        <dbReference type="Rhea" id="RHEA-COMP:14399"/>
        <dbReference type="ChEBI" id="CHEBI:15377"/>
        <dbReference type="ChEBI" id="CHEBI:15378"/>
        <dbReference type="ChEBI" id="CHEBI:15379"/>
        <dbReference type="ChEBI" id="CHEBI:29033"/>
        <dbReference type="ChEBI" id="CHEBI:29034"/>
        <dbReference type="EC" id="7.1.1.9"/>
    </reaction>
    <physiologicalReaction direction="left-to-right" evidence="3">
        <dbReference type="Rhea" id="RHEA:11437"/>
    </physiologicalReaction>
</comment>
<comment type="cofactor">
    <cofactor evidence="2">
        <name>heme</name>
        <dbReference type="ChEBI" id="CHEBI:30413"/>
    </cofactor>
    <text evidence="2">Binds 2 heme A groups non-covalently per subunit.</text>
</comment>
<comment type="cofactor">
    <cofactor evidence="2">
        <name>Cu cation</name>
        <dbReference type="ChEBI" id="CHEBI:23378"/>
    </cofactor>
    <text evidence="2">Binds a copper B center.</text>
</comment>
<comment type="pathway">
    <text evidence="3">Energy metabolism; oxidative phosphorylation.</text>
</comment>
<comment type="subunit">
    <text evidence="1 2">Component of the cytochrome c oxidase (complex IV, CIV), a multisubunit enzyme composed of 14 subunits. The complex is composed of a catalytic core of 3 subunits MT-CO1, MT-CO2 and MT-CO3, encoded in the mitochondrial DNA, and 11 supernumerary subunits COX4I, COX5A, COX5B, COX6A, COX6B, COX6C, COX7A, COX7B, COX7C, COX8 and NDUFA4, which are encoded in the nuclear genome. The complex exists as a monomer or a dimer and forms supercomplexes (SCs) in the inner mitochondrial membrane with NADH-ubiquinone oxidoreductase (complex I, CI) and ubiquinol-cytochrome c oxidoreductase (cytochrome b-c1 complex, complex III, CIII), resulting in different assemblies (supercomplex SCI(1)III(2)IV(1) and megacomplex MCI(2)III(2)IV(2)) (By similarity). As a newly synthesized protein, rapidly incorporates into a multi-subunit assembly intermediate in the inner membrane, called MITRAC (mitochondrial translation regulation assembly intermediate of cytochrome c oxidase) complex, whose core components are COA3/MITRAC12 and COX14. Within the MITRAC complex, interacts with COA3 and with SMIM20/MITRAC7; the interaction with SMIM20 stabilizes the newly synthesized MT-CO1 and prevents its premature turnover. Interacts with TMEM177 in a COX20-dependent manner (By similarity).</text>
</comment>
<comment type="subcellular location">
    <subcellularLocation>
        <location evidence="2">Mitochondrion inner membrane</location>
        <topology evidence="2">Multi-pass membrane protein</topology>
    </subcellularLocation>
</comment>
<comment type="similarity">
    <text evidence="4">Belongs to the heme-copper respiratory oxidase family.</text>
</comment>